<comment type="catalytic activity">
    <reaction evidence="1">
        <text>2-(N(omega)-L-arginino)succinate = fumarate + L-arginine</text>
        <dbReference type="Rhea" id="RHEA:24020"/>
        <dbReference type="ChEBI" id="CHEBI:29806"/>
        <dbReference type="ChEBI" id="CHEBI:32682"/>
        <dbReference type="ChEBI" id="CHEBI:57472"/>
        <dbReference type="EC" id="4.3.2.1"/>
    </reaction>
</comment>
<comment type="pathway">
    <text evidence="1">Amino-acid biosynthesis; L-arginine biosynthesis; L-arginine from L-ornithine and carbamoyl phosphate: step 3/3.</text>
</comment>
<comment type="subcellular location">
    <subcellularLocation>
        <location evidence="1">Cytoplasm</location>
    </subcellularLocation>
</comment>
<comment type="similarity">
    <text evidence="1">Belongs to the lyase 1 family. Argininosuccinate lyase subfamily.</text>
</comment>
<accession>Q9HMQ3</accession>
<proteinExistence type="inferred from homology"/>
<feature type="chain" id="PRO_0000137860" description="Argininosuccinate lyase">
    <location>
        <begin position="1"/>
        <end position="485"/>
    </location>
</feature>
<dbReference type="EC" id="4.3.2.1" evidence="1"/>
<dbReference type="EMBL" id="AE004437">
    <property type="protein sequence ID" value="AAG20518.1"/>
    <property type="molecule type" value="Genomic_DNA"/>
</dbReference>
<dbReference type="PIR" id="B84394">
    <property type="entry name" value="B84394"/>
</dbReference>
<dbReference type="RefSeq" id="WP_010903820.1">
    <property type="nucleotide sequence ID" value="NC_002607.1"/>
</dbReference>
<dbReference type="SMR" id="Q9HMQ3"/>
<dbReference type="FunCoup" id="Q9HMQ3">
    <property type="interactions" value="160"/>
</dbReference>
<dbReference type="STRING" id="64091.VNG_2436G"/>
<dbReference type="PaxDb" id="64091-VNG_2436G"/>
<dbReference type="GeneID" id="68694955"/>
<dbReference type="KEGG" id="hal:VNG_2436G"/>
<dbReference type="PATRIC" id="fig|64091.14.peg.1886"/>
<dbReference type="HOGENOM" id="CLU_027272_2_3_2"/>
<dbReference type="InParanoid" id="Q9HMQ3"/>
<dbReference type="OrthoDB" id="27337at2157"/>
<dbReference type="PhylomeDB" id="Q9HMQ3"/>
<dbReference type="UniPathway" id="UPA00068">
    <property type="reaction ID" value="UER00114"/>
</dbReference>
<dbReference type="Proteomes" id="UP000000554">
    <property type="component" value="Chromosome"/>
</dbReference>
<dbReference type="GO" id="GO:0005829">
    <property type="term" value="C:cytosol"/>
    <property type="evidence" value="ECO:0000318"/>
    <property type="project" value="GO_Central"/>
</dbReference>
<dbReference type="GO" id="GO:0004056">
    <property type="term" value="F:argininosuccinate lyase activity"/>
    <property type="evidence" value="ECO:0000318"/>
    <property type="project" value="GO_Central"/>
</dbReference>
<dbReference type="GO" id="GO:0042450">
    <property type="term" value="P:arginine biosynthetic process via ornithine"/>
    <property type="evidence" value="ECO:0000318"/>
    <property type="project" value="GO_Central"/>
</dbReference>
<dbReference type="GO" id="GO:0006526">
    <property type="term" value="P:L-arginine biosynthetic process"/>
    <property type="evidence" value="ECO:0007669"/>
    <property type="project" value="UniProtKB-UniRule"/>
</dbReference>
<dbReference type="CDD" id="cd01359">
    <property type="entry name" value="Argininosuccinate_lyase"/>
    <property type="match status" value="1"/>
</dbReference>
<dbReference type="Gene3D" id="1.10.40.30">
    <property type="entry name" value="Fumarase/aspartase (C-terminal domain)"/>
    <property type="match status" value="1"/>
</dbReference>
<dbReference type="Gene3D" id="1.20.200.10">
    <property type="entry name" value="Fumarase/aspartase (Central domain)"/>
    <property type="match status" value="1"/>
</dbReference>
<dbReference type="Gene3D" id="1.10.275.10">
    <property type="entry name" value="Fumarase/aspartase (N-terminal domain)"/>
    <property type="match status" value="1"/>
</dbReference>
<dbReference type="HAMAP" id="MF_00006">
    <property type="entry name" value="Arg_succ_lyase"/>
    <property type="match status" value="1"/>
</dbReference>
<dbReference type="InterPro" id="IPR029419">
    <property type="entry name" value="Arg_succ_lyase_C"/>
</dbReference>
<dbReference type="InterPro" id="IPR009049">
    <property type="entry name" value="Argininosuccinate_lyase"/>
</dbReference>
<dbReference type="InterPro" id="IPR024083">
    <property type="entry name" value="Fumarase/histidase_N"/>
</dbReference>
<dbReference type="InterPro" id="IPR000362">
    <property type="entry name" value="Fumarate_lyase_fam"/>
</dbReference>
<dbReference type="InterPro" id="IPR022761">
    <property type="entry name" value="Fumarate_lyase_N"/>
</dbReference>
<dbReference type="InterPro" id="IPR008948">
    <property type="entry name" value="L-Aspartase-like"/>
</dbReference>
<dbReference type="NCBIfam" id="TIGR00838">
    <property type="entry name" value="argH"/>
    <property type="match status" value="1"/>
</dbReference>
<dbReference type="PANTHER" id="PTHR43814">
    <property type="entry name" value="ARGININOSUCCINATE LYASE"/>
    <property type="match status" value="1"/>
</dbReference>
<dbReference type="PANTHER" id="PTHR43814:SF1">
    <property type="entry name" value="ARGININOSUCCINATE LYASE"/>
    <property type="match status" value="1"/>
</dbReference>
<dbReference type="Pfam" id="PF14698">
    <property type="entry name" value="ASL_C2"/>
    <property type="match status" value="1"/>
</dbReference>
<dbReference type="Pfam" id="PF00206">
    <property type="entry name" value="Lyase_1"/>
    <property type="match status" value="1"/>
</dbReference>
<dbReference type="PRINTS" id="PR00145">
    <property type="entry name" value="ARGSUCLYASE"/>
</dbReference>
<dbReference type="PRINTS" id="PR00149">
    <property type="entry name" value="FUMRATELYASE"/>
</dbReference>
<dbReference type="SUPFAM" id="SSF48557">
    <property type="entry name" value="L-aspartase-like"/>
    <property type="match status" value="1"/>
</dbReference>
<sequence length="485" mass="48792">MTGGGDPVVRRDRFSGGPARSFLSSMDGDGRIFEADLAVDRAHVVMLAEQDVIGDEAAAAILGALADVEAAGFDALPPGEDVHEAIETAVVEAVGRDGGKLHTARSRNDEVAACIRYRLRADLLDAIEVVVALRSALADVAAAEAETVMPGFTHLQPAQPTTVAHWALSYAGTLARDTGRLCDAYGRTNESPLGAAAFAGTTFGVDRERTAALLGFDGVVANAADAAASRDFLLEAVSALASVAVTCSGLAADVVFFANRGFVEVSDDYASTSSIMPQKKNPDTMELVRATAGDAVGAQQALATTLQGLPRAYNRDLQRATGHAWTAVDGVTSAVEVAAGVVATAGWPADDLEAAAGEGFSTATGVADALAAGGLPFRTAHEVVALAAERGCEGATLDAVAAATEAVTGEPLSAVVEPAAVADALDPVGSVAARDSAGGPAPAAVEAAVADVRDGIDADEAALAAERASLADAADALAAEVSGYV</sequence>
<evidence type="ECO:0000255" key="1">
    <source>
        <dbReference type="HAMAP-Rule" id="MF_00006"/>
    </source>
</evidence>
<protein>
    <recommendedName>
        <fullName evidence="1">Argininosuccinate lyase</fullName>
        <shortName evidence="1">ASAL</shortName>
        <ecNumber evidence="1">4.3.2.1</ecNumber>
    </recommendedName>
    <alternativeName>
        <fullName evidence="1">Arginosuccinase</fullName>
    </alternativeName>
</protein>
<organism>
    <name type="scientific">Halobacterium salinarum (strain ATCC 700922 / JCM 11081 / NRC-1)</name>
    <name type="common">Halobacterium halobium</name>
    <dbReference type="NCBI Taxonomy" id="64091"/>
    <lineage>
        <taxon>Archaea</taxon>
        <taxon>Methanobacteriati</taxon>
        <taxon>Methanobacteriota</taxon>
        <taxon>Stenosarchaea group</taxon>
        <taxon>Halobacteria</taxon>
        <taxon>Halobacteriales</taxon>
        <taxon>Halobacteriaceae</taxon>
        <taxon>Halobacterium</taxon>
        <taxon>Halobacterium salinarum NRC-34001</taxon>
    </lineage>
</organism>
<name>ARLY_HALSA</name>
<gene>
    <name evidence="1" type="primary">argH</name>
    <name type="ordered locus">VNG_2436G</name>
</gene>
<reference key="1">
    <citation type="journal article" date="2000" name="Proc. Natl. Acad. Sci. U.S.A.">
        <title>Genome sequence of Halobacterium species NRC-1.</title>
        <authorList>
            <person name="Ng W.V."/>
            <person name="Kennedy S.P."/>
            <person name="Mahairas G.G."/>
            <person name="Berquist B."/>
            <person name="Pan M."/>
            <person name="Shukla H.D."/>
            <person name="Lasky S.R."/>
            <person name="Baliga N.S."/>
            <person name="Thorsson V."/>
            <person name="Sbrogna J."/>
            <person name="Swartzell S."/>
            <person name="Weir D."/>
            <person name="Hall J."/>
            <person name="Dahl T.A."/>
            <person name="Welti R."/>
            <person name="Goo Y.A."/>
            <person name="Leithauser B."/>
            <person name="Keller K."/>
            <person name="Cruz R."/>
            <person name="Danson M.J."/>
            <person name="Hough D.W."/>
            <person name="Maddocks D.G."/>
            <person name="Jablonski P.E."/>
            <person name="Krebs M.P."/>
            <person name="Angevine C.M."/>
            <person name="Dale H."/>
            <person name="Isenbarger T.A."/>
            <person name="Peck R.F."/>
            <person name="Pohlschroder M."/>
            <person name="Spudich J.L."/>
            <person name="Jung K.-H."/>
            <person name="Alam M."/>
            <person name="Freitas T."/>
            <person name="Hou S."/>
            <person name="Daniels C.J."/>
            <person name="Dennis P.P."/>
            <person name="Omer A.D."/>
            <person name="Ebhardt H."/>
            <person name="Lowe T.M."/>
            <person name="Liang P."/>
            <person name="Riley M."/>
            <person name="Hood L."/>
            <person name="DasSarma S."/>
        </authorList>
    </citation>
    <scope>NUCLEOTIDE SEQUENCE [LARGE SCALE GENOMIC DNA]</scope>
    <source>
        <strain>ATCC 700922 / JCM 11081 / NRC-1</strain>
    </source>
</reference>
<keyword id="KW-0028">Amino-acid biosynthesis</keyword>
<keyword id="KW-0055">Arginine biosynthesis</keyword>
<keyword id="KW-0963">Cytoplasm</keyword>
<keyword id="KW-0456">Lyase</keyword>
<keyword id="KW-1185">Reference proteome</keyword>